<proteinExistence type="inferred from homology"/>
<sequence length="284" mass="30570">MNLAGFEVGLDKPFFLIAGTCVVESEQMTIDTAGRLKEICATLGVPFIYKSSYDKANRSSGKSFRGLGMDEGLRILAEVKRQLNVPVLTDVHEIDEIAPVAAVVDVLQTPAFLCRQTDFIRACAQSGKPVNIKKGQFLAPHDMKNVIDKARDAARDAGLSEDRFMACERGVSFGYNNLVSDMRSLAIMRETGAPVVFDATHSVQLPGGQGTSSGGQREFVPVLARAALATGVAGLFMETHPNPAEAKSDGPNAVPLGRMAALLETLVTLDRAVKRVPFLENDFN</sequence>
<reference key="1">
    <citation type="journal article" date="2010" name="Genome Biol. Evol.">
        <title>Continuing evolution of Burkholderia mallei through genome reduction and large-scale rearrangements.</title>
        <authorList>
            <person name="Losada L."/>
            <person name="Ronning C.M."/>
            <person name="DeShazer D."/>
            <person name="Woods D."/>
            <person name="Fedorova N."/>
            <person name="Kim H.S."/>
            <person name="Shabalina S.A."/>
            <person name="Pearson T.R."/>
            <person name="Brinkac L."/>
            <person name="Tan P."/>
            <person name="Nandi T."/>
            <person name="Crabtree J."/>
            <person name="Badger J."/>
            <person name="Beckstrom-Sternberg S."/>
            <person name="Saqib M."/>
            <person name="Schutzer S.E."/>
            <person name="Keim P."/>
            <person name="Nierman W.C."/>
        </authorList>
    </citation>
    <scope>NUCLEOTIDE SEQUENCE [LARGE SCALE GENOMIC DNA]</scope>
    <source>
        <strain>NCTC 10229</strain>
    </source>
</reference>
<gene>
    <name evidence="1" type="primary">kdsA</name>
    <name type="ordered locus">BMA10229_A3124</name>
</gene>
<keyword id="KW-0963">Cytoplasm</keyword>
<keyword id="KW-0448">Lipopolysaccharide biosynthesis</keyword>
<keyword id="KW-0808">Transferase</keyword>
<feature type="chain" id="PRO_1000003329" description="2-dehydro-3-deoxyphosphooctonate aldolase">
    <location>
        <begin position="1"/>
        <end position="284"/>
    </location>
</feature>
<protein>
    <recommendedName>
        <fullName evidence="1">2-dehydro-3-deoxyphosphooctonate aldolase</fullName>
        <ecNumber evidence="1">2.5.1.55</ecNumber>
    </recommendedName>
    <alternativeName>
        <fullName evidence="1">3-deoxy-D-manno-octulosonic acid 8-phosphate synthase</fullName>
    </alternativeName>
    <alternativeName>
        <fullName evidence="1">KDO-8-phosphate synthase</fullName>
        <shortName evidence="1">KDO 8-P synthase</shortName>
        <shortName evidence="1">KDOPS</shortName>
    </alternativeName>
    <alternativeName>
        <fullName evidence="1">Phospho-2-dehydro-3-deoxyoctonate aldolase</fullName>
    </alternativeName>
</protein>
<evidence type="ECO:0000255" key="1">
    <source>
        <dbReference type="HAMAP-Rule" id="MF_00056"/>
    </source>
</evidence>
<organism>
    <name type="scientific">Burkholderia mallei (strain NCTC 10229)</name>
    <dbReference type="NCBI Taxonomy" id="412022"/>
    <lineage>
        <taxon>Bacteria</taxon>
        <taxon>Pseudomonadati</taxon>
        <taxon>Pseudomonadota</taxon>
        <taxon>Betaproteobacteria</taxon>
        <taxon>Burkholderiales</taxon>
        <taxon>Burkholderiaceae</taxon>
        <taxon>Burkholderia</taxon>
        <taxon>pseudomallei group</taxon>
    </lineage>
</organism>
<accession>A2SAU6</accession>
<dbReference type="EC" id="2.5.1.55" evidence="1"/>
<dbReference type="EMBL" id="CP000546">
    <property type="protein sequence ID" value="ABN01688.1"/>
    <property type="molecule type" value="Genomic_DNA"/>
</dbReference>
<dbReference type="RefSeq" id="WP_004193658.1">
    <property type="nucleotide sequence ID" value="NC_008836.1"/>
</dbReference>
<dbReference type="SMR" id="A2SAU6"/>
<dbReference type="GeneID" id="93060828"/>
<dbReference type="KEGG" id="bml:BMA10229_A3124"/>
<dbReference type="HOGENOM" id="CLU_036666_0_0_4"/>
<dbReference type="UniPathway" id="UPA00030"/>
<dbReference type="UniPathway" id="UPA00357">
    <property type="reaction ID" value="UER00474"/>
</dbReference>
<dbReference type="Proteomes" id="UP000002283">
    <property type="component" value="Chromosome I"/>
</dbReference>
<dbReference type="GO" id="GO:0005737">
    <property type="term" value="C:cytoplasm"/>
    <property type="evidence" value="ECO:0007669"/>
    <property type="project" value="UniProtKB-SubCell"/>
</dbReference>
<dbReference type="GO" id="GO:0008676">
    <property type="term" value="F:3-deoxy-8-phosphooctulonate synthase activity"/>
    <property type="evidence" value="ECO:0007669"/>
    <property type="project" value="UniProtKB-UniRule"/>
</dbReference>
<dbReference type="GO" id="GO:0019294">
    <property type="term" value="P:keto-3-deoxy-D-manno-octulosonic acid biosynthetic process"/>
    <property type="evidence" value="ECO:0007669"/>
    <property type="project" value="UniProtKB-UniRule"/>
</dbReference>
<dbReference type="Gene3D" id="3.20.20.70">
    <property type="entry name" value="Aldolase class I"/>
    <property type="match status" value="1"/>
</dbReference>
<dbReference type="HAMAP" id="MF_00056">
    <property type="entry name" value="KDO8P_synth"/>
    <property type="match status" value="1"/>
</dbReference>
<dbReference type="InterPro" id="IPR013785">
    <property type="entry name" value="Aldolase_TIM"/>
</dbReference>
<dbReference type="InterPro" id="IPR006218">
    <property type="entry name" value="DAHP1/KDSA"/>
</dbReference>
<dbReference type="InterPro" id="IPR006269">
    <property type="entry name" value="KDO8P_synthase"/>
</dbReference>
<dbReference type="NCBIfam" id="TIGR01362">
    <property type="entry name" value="KDO8P_synth"/>
    <property type="match status" value="1"/>
</dbReference>
<dbReference type="NCBIfam" id="NF003543">
    <property type="entry name" value="PRK05198.1"/>
    <property type="match status" value="1"/>
</dbReference>
<dbReference type="PANTHER" id="PTHR21057">
    <property type="entry name" value="PHOSPHO-2-DEHYDRO-3-DEOXYHEPTONATE ALDOLASE"/>
    <property type="match status" value="1"/>
</dbReference>
<dbReference type="Pfam" id="PF00793">
    <property type="entry name" value="DAHP_synth_1"/>
    <property type="match status" value="1"/>
</dbReference>
<dbReference type="SUPFAM" id="SSF51569">
    <property type="entry name" value="Aldolase"/>
    <property type="match status" value="1"/>
</dbReference>
<name>KDSA_BURM9</name>
<comment type="catalytic activity">
    <reaction evidence="1">
        <text>D-arabinose 5-phosphate + phosphoenolpyruvate + H2O = 3-deoxy-alpha-D-manno-2-octulosonate-8-phosphate + phosphate</text>
        <dbReference type="Rhea" id="RHEA:14053"/>
        <dbReference type="ChEBI" id="CHEBI:15377"/>
        <dbReference type="ChEBI" id="CHEBI:43474"/>
        <dbReference type="ChEBI" id="CHEBI:57693"/>
        <dbReference type="ChEBI" id="CHEBI:58702"/>
        <dbReference type="ChEBI" id="CHEBI:85985"/>
        <dbReference type="EC" id="2.5.1.55"/>
    </reaction>
</comment>
<comment type="pathway">
    <text evidence="1">Carbohydrate biosynthesis; 3-deoxy-D-manno-octulosonate biosynthesis; 3-deoxy-D-manno-octulosonate from D-ribulose 5-phosphate: step 2/3.</text>
</comment>
<comment type="pathway">
    <text evidence="1">Bacterial outer membrane biogenesis; lipopolysaccharide biosynthesis.</text>
</comment>
<comment type="subcellular location">
    <subcellularLocation>
        <location evidence="1">Cytoplasm</location>
    </subcellularLocation>
</comment>
<comment type="similarity">
    <text evidence="1">Belongs to the KdsA family.</text>
</comment>